<name>ISPF_ECODH</name>
<evidence type="ECO:0000255" key="1">
    <source>
        <dbReference type="HAMAP-Rule" id="MF_00107"/>
    </source>
</evidence>
<comment type="function">
    <text evidence="1">Involved in the biosynthesis of isopentenyl diphosphate (IPP) and dimethylallyl diphosphate (DMAPP), two major building blocks of isoprenoid compounds. Catalyzes the conversion of 4-diphosphocytidyl-2-C-methyl-D-erythritol 2-phosphate (CDP-ME2P) to 2-C-methyl-D-erythritol 2,4-cyclodiphosphate (ME-CPP) with a corresponding release of cytidine 5-monophosphate (CMP).</text>
</comment>
<comment type="catalytic activity">
    <reaction evidence="1">
        <text>4-CDP-2-C-methyl-D-erythritol 2-phosphate = 2-C-methyl-D-erythritol 2,4-cyclic diphosphate + CMP</text>
        <dbReference type="Rhea" id="RHEA:23864"/>
        <dbReference type="ChEBI" id="CHEBI:57919"/>
        <dbReference type="ChEBI" id="CHEBI:58483"/>
        <dbReference type="ChEBI" id="CHEBI:60377"/>
        <dbReference type="EC" id="4.6.1.12"/>
    </reaction>
</comment>
<comment type="cofactor">
    <cofactor evidence="1">
        <name>a divalent metal cation</name>
        <dbReference type="ChEBI" id="CHEBI:60240"/>
    </cofactor>
    <text evidence="1">Binds 1 divalent metal cation per subunit.</text>
</comment>
<comment type="pathway">
    <text evidence="1">Isoprenoid biosynthesis; isopentenyl diphosphate biosynthesis via DXP pathway; isopentenyl diphosphate from 1-deoxy-D-xylulose 5-phosphate: step 4/6.</text>
</comment>
<comment type="subunit">
    <text evidence="1">Homotrimer.</text>
</comment>
<comment type="similarity">
    <text evidence="1">Belongs to the IspF family.</text>
</comment>
<gene>
    <name evidence="1" type="primary">ispF</name>
    <name type="ordered locus">ECDH10B_2914</name>
</gene>
<protein>
    <recommendedName>
        <fullName evidence="1">2-C-methyl-D-erythritol 2,4-cyclodiphosphate synthase</fullName>
        <shortName evidence="1">MECDP-synthase</shortName>
        <shortName evidence="1">MECPP-synthase</shortName>
        <shortName evidence="1">MECPS</shortName>
        <ecNumber evidence="1">4.6.1.12</ecNumber>
    </recommendedName>
</protein>
<feature type="chain" id="PRO_1000094260" description="2-C-methyl-D-erythritol 2,4-cyclodiphosphate synthase">
    <location>
        <begin position="1"/>
        <end position="159"/>
    </location>
</feature>
<feature type="binding site" evidence="1">
    <location>
        <begin position="8"/>
        <end position="10"/>
    </location>
    <ligand>
        <name>4-CDP-2-C-methyl-D-erythritol 2-phosphate</name>
        <dbReference type="ChEBI" id="CHEBI:57919"/>
    </ligand>
</feature>
<feature type="binding site" evidence="1">
    <location>
        <position position="8"/>
    </location>
    <ligand>
        <name>a divalent metal cation</name>
        <dbReference type="ChEBI" id="CHEBI:60240"/>
    </ligand>
</feature>
<feature type="binding site" evidence="1">
    <location>
        <position position="10"/>
    </location>
    <ligand>
        <name>a divalent metal cation</name>
        <dbReference type="ChEBI" id="CHEBI:60240"/>
    </ligand>
</feature>
<feature type="binding site" evidence="1">
    <location>
        <begin position="34"/>
        <end position="35"/>
    </location>
    <ligand>
        <name>4-CDP-2-C-methyl-D-erythritol 2-phosphate</name>
        <dbReference type="ChEBI" id="CHEBI:57919"/>
    </ligand>
</feature>
<feature type="binding site" evidence="1">
    <location>
        <position position="42"/>
    </location>
    <ligand>
        <name>a divalent metal cation</name>
        <dbReference type="ChEBI" id="CHEBI:60240"/>
    </ligand>
</feature>
<feature type="binding site" evidence="1">
    <location>
        <begin position="56"/>
        <end position="58"/>
    </location>
    <ligand>
        <name>4-CDP-2-C-methyl-D-erythritol 2-phosphate</name>
        <dbReference type="ChEBI" id="CHEBI:57919"/>
    </ligand>
</feature>
<feature type="binding site" evidence="1">
    <location>
        <begin position="61"/>
        <end position="65"/>
    </location>
    <ligand>
        <name>4-CDP-2-C-methyl-D-erythritol 2-phosphate</name>
        <dbReference type="ChEBI" id="CHEBI:57919"/>
    </ligand>
</feature>
<feature type="binding site" evidence="1">
    <location>
        <begin position="100"/>
        <end position="106"/>
    </location>
    <ligand>
        <name>4-CDP-2-C-methyl-D-erythritol 2-phosphate</name>
        <dbReference type="ChEBI" id="CHEBI:57919"/>
    </ligand>
</feature>
<feature type="binding site" evidence="1">
    <location>
        <begin position="132"/>
        <end position="135"/>
    </location>
    <ligand>
        <name>4-CDP-2-C-methyl-D-erythritol 2-phosphate</name>
        <dbReference type="ChEBI" id="CHEBI:57919"/>
    </ligand>
</feature>
<feature type="binding site" evidence="1">
    <location>
        <position position="139"/>
    </location>
    <ligand>
        <name>4-CDP-2-C-methyl-D-erythritol 2-phosphate</name>
        <dbReference type="ChEBI" id="CHEBI:57919"/>
    </ligand>
</feature>
<feature type="binding site" evidence="1">
    <location>
        <position position="142"/>
    </location>
    <ligand>
        <name>4-CDP-2-C-methyl-D-erythritol 2-phosphate</name>
        <dbReference type="ChEBI" id="CHEBI:57919"/>
    </ligand>
</feature>
<feature type="site" description="Transition state stabilizer" evidence="1">
    <location>
        <position position="34"/>
    </location>
</feature>
<feature type="site" description="Transition state stabilizer" evidence="1">
    <location>
        <position position="133"/>
    </location>
</feature>
<dbReference type="EC" id="4.6.1.12" evidence="1"/>
<dbReference type="EMBL" id="CP000948">
    <property type="protein sequence ID" value="ACB03863.1"/>
    <property type="molecule type" value="Genomic_DNA"/>
</dbReference>
<dbReference type="RefSeq" id="WP_001219242.1">
    <property type="nucleotide sequence ID" value="NC_010473.1"/>
</dbReference>
<dbReference type="SMR" id="B1XCS2"/>
<dbReference type="GeneID" id="93779260"/>
<dbReference type="KEGG" id="ecd:ECDH10B_2914"/>
<dbReference type="HOGENOM" id="CLU_084630_2_0_6"/>
<dbReference type="UniPathway" id="UPA00056">
    <property type="reaction ID" value="UER00095"/>
</dbReference>
<dbReference type="GO" id="GO:0008685">
    <property type="term" value="F:2-C-methyl-D-erythritol 2,4-cyclodiphosphate synthase activity"/>
    <property type="evidence" value="ECO:0007669"/>
    <property type="project" value="UniProtKB-UniRule"/>
</dbReference>
<dbReference type="GO" id="GO:0046872">
    <property type="term" value="F:metal ion binding"/>
    <property type="evidence" value="ECO:0007669"/>
    <property type="project" value="UniProtKB-KW"/>
</dbReference>
<dbReference type="GO" id="GO:0019288">
    <property type="term" value="P:isopentenyl diphosphate biosynthetic process, methylerythritol 4-phosphate pathway"/>
    <property type="evidence" value="ECO:0007669"/>
    <property type="project" value="UniProtKB-UniRule"/>
</dbReference>
<dbReference type="GO" id="GO:0016114">
    <property type="term" value="P:terpenoid biosynthetic process"/>
    <property type="evidence" value="ECO:0007669"/>
    <property type="project" value="InterPro"/>
</dbReference>
<dbReference type="CDD" id="cd00554">
    <property type="entry name" value="MECDP_synthase"/>
    <property type="match status" value="1"/>
</dbReference>
<dbReference type="FunFam" id="3.30.1330.50:FF:000001">
    <property type="entry name" value="2-C-methyl-D-erythritol 2,4-cyclodiphosphate synthase"/>
    <property type="match status" value="1"/>
</dbReference>
<dbReference type="Gene3D" id="3.30.1330.50">
    <property type="entry name" value="2-C-methyl-D-erythritol 2,4-cyclodiphosphate synthase"/>
    <property type="match status" value="1"/>
</dbReference>
<dbReference type="HAMAP" id="MF_00107">
    <property type="entry name" value="IspF"/>
    <property type="match status" value="1"/>
</dbReference>
<dbReference type="InterPro" id="IPR003526">
    <property type="entry name" value="MECDP_synthase"/>
</dbReference>
<dbReference type="InterPro" id="IPR020555">
    <property type="entry name" value="MECDP_synthase_CS"/>
</dbReference>
<dbReference type="InterPro" id="IPR036571">
    <property type="entry name" value="MECDP_synthase_sf"/>
</dbReference>
<dbReference type="NCBIfam" id="TIGR00151">
    <property type="entry name" value="ispF"/>
    <property type="match status" value="1"/>
</dbReference>
<dbReference type="PANTHER" id="PTHR43181">
    <property type="entry name" value="2-C-METHYL-D-ERYTHRITOL 2,4-CYCLODIPHOSPHATE SYNTHASE, CHLOROPLASTIC"/>
    <property type="match status" value="1"/>
</dbReference>
<dbReference type="PANTHER" id="PTHR43181:SF1">
    <property type="entry name" value="2-C-METHYL-D-ERYTHRITOL 2,4-CYCLODIPHOSPHATE SYNTHASE, CHLOROPLASTIC"/>
    <property type="match status" value="1"/>
</dbReference>
<dbReference type="Pfam" id="PF02542">
    <property type="entry name" value="YgbB"/>
    <property type="match status" value="1"/>
</dbReference>
<dbReference type="SUPFAM" id="SSF69765">
    <property type="entry name" value="IpsF-like"/>
    <property type="match status" value="1"/>
</dbReference>
<dbReference type="PROSITE" id="PS01350">
    <property type="entry name" value="ISPF"/>
    <property type="match status" value="1"/>
</dbReference>
<organism>
    <name type="scientific">Escherichia coli (strain K12 / DH10B)</name>
    <dbReference type="NCBI Taxonomy" id="316385"/>
    <lineage>
        <taxon>Bacteria</taxon>
        <taxon>Pseudomonadati</taxon>
        <taxon>Pseudomonadota</taxon>
        <taxon>Gammaproteobacteria</taxon>
        <taxon>Enterobacterales</taxon>
        <taxon>Enterobacteriaceae</taxon>
        <taxon>Escherichia</taxon>
    </lineage>
</organism>
<proteinExistence type="inferred from homology"/>
<reference key="1">
    <citation type="journal article" date="2008" name="J. Bacteriol.">
        <title>The complete genome sequence of Escherichia coli DH10B: insights into the biology of a laboratory workhorse.</title>
        <authorList>
            <person name="Durfee T."/>
            <person name="Nelson R."/>
            <person name="Baldwin S."/>
            <person name="Plunkett G. III"/>
            <person name="Burland V."/>
            <person name="Mau B."/>
            <person name="Petrosino J.F."/>
            <person name="Qin X."/>
            <person name="Muzny D.M."/>
            <person name="Ayele M."/>
            <person name="Gibbs R.A."/>
            <person name="Csorgo B."/>
            <person name="Posfai G."/>
            <person name="Weinstock G.M."/>
            <person name="Blattner F.R."/>
        </authorList>
    </citation>
    <scope>NUCLEOTIDE SEQUENCE [LARGE SCALE GENOMIC DNA]</scope>
    <source>
        <strain>K12 / DH10B</strain>
    </source>
</reference>
<accession>B1XCS2</accession>
<sequence length="159" mass="16898">MRIGHGFDVHAFGGEGPIIIGGVRIPYEKGLLAHSDGDVALHALTDALLGAAALGDIGKLFPDTDPAFKGADSRELLREAWRRIQAKGYTLGNVDVTIIAQAPKMLPHIPQMRVFIAEDLGCHMDDVNVKATTTEKLGFTGRGEGIACEAVALLIKATK</sequence>
<keyword id="KW-0414">Isoprene biosynthesis</keyword>
<keyword id="KW-0456">Lyase</keyword>
<keyword id="KW-0479">Metal-binding</keyword>